<protein>
    <recommendedName>
        <fullName>Thermosome subunit 2</fullName>
    </recommendedName>
    <alternativeName>
        <fullName>Heat shock protein CCT2</fullName>
    </alternativeName>
</protein>
<evidence type="ECO:0000256" key="1">
    <source>
        <dbReference type="SAM" id="MobiDB-lite"/>
    </source>
</evidence>
<evidence type="ECO:0000269" key="2">
    <source>
    </source>
</evidence>
<evidence type="ECO:0000269" key="3">
    <source>
    </source>
</evidence>
<evidence type="ECO:0000269" key="4">
    <source>
    </source>
</evidence>
<evidence type="ECO:0000305" key="5"/>
<gene>
    <name type="primary">cct2</name>
    <name type="ordered locus">HVO_0455</name>
</gene>
<organism>
    <name type="scientific">Haloferax volcanii (strain ATCC 29605 / DSM 3757 / JCM 8879 / NBRC 14742 / NCIMB 2012 / VKM B-1768 / DS2)</name>
    <name type="common">Halobacterium volcanii</name>
    <dbReference type="NCBI Taxonomy" id="309800"/>
    <lineage>
        <taxon>Archaea</taxon>
        <taxon>Methanobacteriati</taxon>
        <taxon>Methanobacteriota</taxon>
        <taxon>Stenosarchaea group</taxon>
        <taxon>Halobacteria</taxon>
        <taxon>Halobacteriales</taxon>
        <taxon>Haloferacaceae</taxon>
        <taxon>Haloferax</taxon>
    </lineage>
</organism>
<proteinExistence type="evidence at protein level"/>
<feature type="chain" id="PRO_0000128388" description="Thermosome subunit 2">
    <location>
        <begin position="1"/>
        <end position="557"/>
    </location>
</feature>
<feature type="region of interest" description="Disordered" evidence="1">
    <location>
        <begin position="527"/>
        <end position="557"/>
    </location>
</feature>
<feature type="compositionally biased region" description="Gly residues" evidence="1">
    <location>
        <begin position="539"/>
        <end position="557"/>
    </location>
</feature>
<reference key="1">
    <citation type="journal article" date="1997" name="J. Bacteriol.">
        <title>Characterization of two heat shock genes from Haloferax volcanii: a model system for transcription regulation in the Archaea.</title>
        <authorList>
            <person name="Kuo Y.-P."/>
            <person name="Thompson D.K."/>
            <person name="St Jean A."/>
            <person name="Charlebois R.L."/>
            <person name="Daniels C.J."/>
        </authorList>
    </citation>
    <scope>NUCLEOTIDE SEQUENCE [GENOMIC DNA]</scope>
    <scope>INDUCTION</scope>
    <source>
        <strain>DS2 / DSM 5716 / WFD11</strain>
    </source>
</reference>
<reference key="2">
    <citation type="journal article" date="2010" name="PLoS ONE">
        <title>The complete genome sequence of Haloferax volcanii DS2, a model archaeon.</title>
        <authorList>
            <person name="Hartman A.L."/>
            <person name="Norais C."/>
            <person name="Badger J.H."/>
            <person name="Delmas S."/>
            <person name="Haldenby S."/>
            <person name="Madupu R."/>
            <person name="Robinson J."/>
            <person name="Khouri H."/>
            <person name="Ren Q."/>
            <person name="Lowe T.M."/>
            <person name="Maupin-Furlow J."/>
            <person name="Pohlschroder M."/>
            <person name="Daniels C."/>
            <person name="Pfeiffer F."/>
            <person name="Allers T."/>
            <person name="Eisen J.A."/>
        </authorList>
    </citation>
    <scope>NUCLEOTIDE SEQUENCE [LARGE SCALE GENOMIC DNA]</scope>
    <source>
        <strain>ATCC 29605 / DSM 3757 / JCM 8879 / NBRC 14742 / NCIMB 2012 / VKM B-1768 / DS2</strain>
    </source>
</reference>
<reference key="3">
    <citation type="journal article" date="2002" name="FEBS Lett.">
        <title>Properties of the chaperonin complex from the halophilic archaeon Haloferax volcanii.</title>
        <authorList>
            <person name="Large A.T."/>
            <person name="Kovacs E."/>
            <person name="Lund P.A."/>
        </authorList>
    </citation>
    <scope>ATPASE ACTIVITY</scope>
    <scope>SUBUNIT</scope>
    <scope>INDUCTION</scope>
    <source>
        <strain>DS2 / DS70</strain>
    </source>
</reference>
<reference key="4">
    <citation type="journal article" date="2006" name="Mol. Microbiol.">
        <title>All three chaperonin genes in the archaeon Haloferax volcanii are individually dispensable.</title>
        <authorList>
            <person name="Kapatai G."/>
            <person name="Large A."/>
            <person name="Benesch J.L."/>
            <person name="Robinson C.V."/>
            <person name="Carrascosa J.L."/>
            <person name="Valpuesta J.M."/>
            <person name="Gowrinathan P."/>
            <person name="Lund P.A."/>
        </authorList>
    </citation>
    <scope>FUNCTION</scope>
    <scope>SUBUNIT</scope>
    <scope>ELECTRON MICROSCOPY OF THE THERMOSOME</scope>
    <source>
        <strain>DS2 / DS70</strain>
    </source>
</reference>
<accession>O30560</accession>
<accession>D4GRZ6</accession>
<comment type="function">
    <text evidence="3 5">Molecular chaperone that assists in the folding or refolding of nascent or denatured proteins along with ATP hydrolysis (Probable). ATPase activity is highest in thermosome assemblies containing CCT1:CCT2, followed by assemblies containing CCT1:CCT2:CCT3. Seems to contribute to thermosome ATPase activity. Not required for growth.</text>
</comment>
<comment type="subunit">
    <text evidence="2 3">The thermosome or CCT complex is a oligomeric complex of two octameric double-ring structures; the complex is probably a heterooligomer of CCT1, CCT2 and CCT3 with yet unknown stoichiometry.</text>
</comment>
<comment type="induction">
    <text evidence="2 4">By heat shock (at protein level).</text>
</comment>
<comment type="miscellaneous">
    <text>One of either CCT1 or CCT2 is required for growth.</text>
</comment>
<comment type="similarity">
    <text evidence="5">Belongs to the TCP-1 chaperonin family.</text>
</comment>
<name>THS2_HALVD</name>
<sequence>MSQRMQQGQPMIIMGEDAQRVKDRDAQEYNIRAARAVAEAVRSTLGPKGMDKMLVDSMGDVTITNDGVTILKEMDIDNPTAEMIVEVAETQEDEAGDGTTTAVAIAGELLKNAEDLLEQDIHPTAIIRGFNLASEKAREEIDDIAERVDPDDEELLKKVAETSMTGKSSELNKELLADLIVRAVRQVTVEANDGSHVVDLENVSIETQTGRSASESELLTGAVIDKDPVHDDMPVQFDEADVLLLNEPVEVEETDIDTNVSIESPDQLQKFLDQEEAQLKQKVDQIVDSGADVVFCQKGIDDLAQHYLAKQGILAVRRTKKSDIRFLKNITGAAVVSDLDSIEAAVLGRASVRRDEAGELFYVEGIGDDVHGVTLLLRGSTDHVVDELERGVQDALDVVASTVADGRVLAGGGAIEVELASRLRNYADSVSGREQLAVEAYADALELVPRVLAENAGLDSIDTLVDLRAAHEDGQVRAGLNVFTGEVEDAFDAGVVETAHAKEQAVASASEAANLVLKIDDIIAAGDLSTGGDDDEEGGAPGGMGGMGGMGGMGGAM</sequence>
<dbReference type="EMBL" id="AF010469">
    <property type="protein sequence ID" value="AAB81496.1"/>
    <property type="molecule type" value="Genomic_DNA"/>
</dbReference>
<dbReference type="EMBL" id="CP001956">
    <property type="protein sequence ID" value="ADE03416.1"/>
    <property type="molecule type" value="Genomic_DNA"/>
</dbReference>
<dbReference type="PIR" id="T47128">
    <property type="entry name" value="T47128"/>
</dbReference>
<dbReference type="SMR" id="O30560"/>
<dbReference type="IntAct" id="O30560">
    <property type="interactions" value="16"/>
</dbReference>
<dbReference type="STRING" id="309800.HVO_0455"/>
<dbReference type="PaxDb" id="309800-C498_16404"/>
<dbReference type="EnsemblBacteria" id="ADE03416">
    <property type="protein sequence ID" value="ADE03416"/>
    <property type="gene ID" value="HVO_0455"/>
</dbReference>
<dbReference type="KEGG" id="hvo:HVO_0455"/>
<dbReference type="eggNOG" id="arCOG01257">
    <property type="taxonomic scope" value="Archaea"/>
</dbReference>
<dbReference type="HOGENOM" id="CLU_008891_7_3_2"/>
<dbReference type="BRENDA" id="5.6.1.7">
    <property type="organism ID" value="2561"/>
</dbReference>
<dbReference type="Proteomes" id="UP000008243">
    <property type="component" value="Chromosome"/>
</dbReference>
<dbReference type="GO" id="GO:0005524">
    <property type="term" value="F:ATP binding"/>
    <property type="evidence" value="ECO:0007669"/>
    <property type="project" value="UniProtKB-KW"/>
</dbReference>
<dbReference type="GO" id="GO:0016887">
    <property type="term" value="F:ATP hydrolysis activity"/>
    <property type="evidence" value="ECO:0007669"/>
    <property type="project" value="InterPro"/>
</dbReference>
<dbReference type="GO" id="GO:0140662">
    <property type="term" value="F:ATP-dependent protein folding chaperone"/>
    <property type="evidence" value="ECO:0007669"/>
    <property type="project" value="InterPro"/>
</dbReference>
<dbReference type="GO" id="GO:0051082">
    <property type="term" value="F:unfolded protein binding"/>
    <property type="evidence" value="ECO:0007669"/>
    <property type="project" value="InterPro"/>
</dbReference>
<dbReference type="CDD" id="cd03343">
    <property type="entry name" value="cpn60"/>
    <property type="match status" value="1"/>
</dbReference>
<dbReference type="FunFam" id="1.10.560.10:FF:000017">
    <property type="entry name" value="T-complex protein 1 subunit eta"/>
    <property type="match status" value="1"/>
</dbReference>
<dbReference type="Gene3D" id="3.50.7.10">
    <property type="entry name" value="GroEL"/>
    <property type="match status" value="1"/>
</dbReference>
<dbReference type="Gene3D" id="1.10.560.10">
    <property type="entry name" value="GroEL-like equatorial domain"/>
    <property type="match status" value="1"/>
</dbReference>
<dbReference type="Gene3D" id="3.30.260.10">
    <property type="entry name" value="TCP-1-like chaperonin intermediate domain"/>
    <property type="match status" value="1"/>
</dbReference>
<dbReference type="InterPro" id="IPR017998">
    <property type="entry name" value="Chaperone_TCP-1"/>
</dbReference>
<dbReference type="InterPro" id="IPR002194">
    <property type="entry name" value="Chaperonin_TCP-1_CS"/>
</dbReference>
<dbReference type="InterPro" id="IPR002423">
    <property type="entry name" value="Cpn60/GroEL/TCP-1"/>
</dbReference>
<dbReference type="InterPro" id="IPR027409">
    <property type="entry name" value="GroEL-like_apical_dom_sf"/>
</dbReference>
<dbReference type="InterPro" id="IPR027413">
    <property type="entry name" value="GROEL-like_equatorial_sf"/>
</dbReference>
<dbReference type="InterPro" id="IPR027410">
    <property type="entry name" value="TCP-1-like_intermed_sf"/>
</dbReference>
<dbReference type="InterPro" id="IPR053374">
    <property type="entry name" value="TCP-1_chaperonin"/>
</dbReference>
<dbReference type="InterPro" id="IPR054827">
    <property type="entry name" value="thermosome_alpha"/>
</dbReference>
<dbReference type="InterPro" id="IPR012714">
    <property type="entry name" value="Thermosome_arc"/>
</dbReference>
<dbReference type="NCBIfam" id="NF041082">
    <property type="entry name" value="thermosome_alpha"/>
    <property type="match status" value="1"/>
</dbReference>
<dbReference type="NCBIfam" id="TIGR02339">
    <property type="entry name" value="thermosome_arch"/>
    <property type="match status" value="1"/>
</dbReference>
<dbReference type="NCBIfam" id="NF041083">
    <property type="entry name" value="thermosome_beta"/>
    <property type="match status" value="1"/>
</dbReference>
<dbReference type="PANTHER" id="PTHR11353">
    <property type="entry name" value="CHAPERONIN"/>
    <property type="match status" value="1"/>
</dbReference>
<dbReference type="Pfam" id="PF00118">
    <property type="entry name" value="Cpn60_TCP1"/>
    <property type="match status" value="1"/>
</dbReference>
<dbReference type="PRINTS" id="PR00304">
    <property type="entry name" value="TCOMPLEXTCP1"/>
</dbReference>
<dbReference type="SUPFAM" id="SSF52029">
    <property type="entry name" value="GroEL apical domain-like"/>
    <property type="match status" value="1"/>
</dbReference>
<dbReference type="SUPFAM" id="SSF48592">
    <property type="entry name" value="GroEL equatorial domain-like"/>
    <property type="match status" value="1"/>
</dbReference>
<dbReference type="SUPFAM" id="SSF54849">
    <property type="entry name" value="GroEL-intermediate domain like"/>
    <property type="match status" value="1"/>
</dbReference>
<dbReference type="PROSITE" id="PS00750">
    <property type="entry name" value="TCP1_1"/>
    <property type="match status" value="1"/>
</dbReference>
<dbReference type="PROSITE" id="PS00751">
    <property type="entry name" value="TCP1_2"/>
    <property type="match status" value="1"/>
</dbReference>
<dbReference type="PROSITE" id="PS00995">
    <property type="entry name" value="TCP1_3"/>
    <property type="match status" value="1"/>
</dbReference>
<keyword id="KW-0067">ATP-binding</keyword>
<keyword id="KW-0143">Chaperone</keyword>
<keyword id="KW-0547">Nucleotide-binding</keyword>
<keyword id="KW-1185">Reference proteome</keyword>
<keyword id="KW-0346">Stress response</keyword>